<proteinExistence type="evidence at protein level"/>
<organism>
    <name type="scientific">Arabidopsis thaliana</name>
    <name type="common">Mouse-ear cress</name>
    <dbReference type="NCBI Taxonomy" id="3702"/>
    <lineage>
        <taxon>Eukaryota</taxon>
        <taxon>Viridiplantae</taxon>
        <taxon>Streptophyta</taxon>
        <taxon>Embryophyta</taxon>
        <taxon>Tracheophyta</taxon>
        <taxon>Spermatophyta</taxon>
        <taxon>Magnoliopsida</taxon>
        <taxon>eudicotyledons</taxon>
        <taxon>Gunneridae</taxon>
        <taxon>Pentapetalae</taxon>
        <taxon>rosids</taxon>
        <taxon>malvids</taxon>
        <taxon>Brassicales</taxon>
        <taxon>Brassicaceae</taxon>
        <taxon>Camelineae</taxon>
        <taxon>Arabidopsis</taxon>
    </lineage>
</organism>
<gene>
    <name type="primary">NPF2.12</name>
    <name type="synonym">NRT1:6</name>
    <name type="ordered locus">At1g27080</name>
    <name type="ORF">T7N9.14</name>
</gene>
<feature type="chain" id="PRO_0000399947" description="Protein NRT1/ PTR FAMILY 2.12">
    <location>
        <begin position="1"/>
        <end position="576"/>
    </location>
</feature>
<feature type="transmembrane region" description="Helical" evidence="1">
    <location>
        <begin position="58"/>
        <end position="78"/>
    </location>
</feature>
<feature type="transmembrane region" description="Helical" evidence="1">
    <location>
        <begin position="89"/>
        <end position="109"/>
    </location>
</feature>
<feature type="transmembrane region" description="Helical" evidence="1">
    <location>
        <begin position="130"/>
        <end position="150"/>
    </location>
</feature>
<feature type="transmembrane region" description="Helical" evidence="1">
    <location>
        <begin position="176"/>
        <end position="196"/>
    </location>
</feature>
<feature type="transmembrane region" description="Helical" evidence="1">
    <location>
        <begin position="203"/>
        <end position="223"/>
    </location>
</feature>
<feature type="transmembrane region" description="Helical" evidence="1">
    <location>
        <begin position="329"/>
        <end position="349"/>
    </location>
</feature>
<feature type="transmembrane region" description="Helical" evidence="1">
    <location>
        <begin position="364"/>
        <end position="384"/>
    </location>
</feature>
<feature type="transmembrane region" description="Helical" evidence="1">
    <location>
        <begin position="406"/>
        <end position="426"/>
    </location>
</feature>
<feature type="transmembrane region" description="Helical" evidence="1">
    <location>
        <begin position="441"/>
        <end position="461"/>
    </location>
</feature>
<feature type="transmembrane region" description="Helical" evidence="1">
    <location>
        <begin position="475"/>
        <end position="495"/>
    </location>
</feature>
<feature type="transmembrane region" description="Helical" evidence="1">
    <location>
        <begin position="522"/>
        <end position="542"/>
    </location>
</feature>
<sequence>MGVVENRKILPEKKLGGWRAITFILGNETLEKLGSIGVSANFMLYLRNVFHMEPVEAFNVYYLWMGLTNFAPLLGALISDAYIGRFKTIAYASLFSILGLMTVTLTACLPQLHPPPCNNPHPDECDDPNKLQLGILFLGLGFLSIGSGGIRPCSIPFGVDQFDQRTEQGLKGVASFFNWYYLTLTMVLIFSHTVVVYLQTVSWVIGFSIPTSLMACAVVLFFVGMRFYVYVKPEGSVFSGIARVIVAARKKRDLKISLVDDGTEEYYEPPVKPGVLSKLPLTDQFKFLDKAAVILDGDLTSEGVPANKWRLCSIQEVEEVKCLIRVVPVWSAGIISIVAMTTQATFMVFQATKMDRHMGPHFEIPAASITVISYITIGIWVPIYEHLLVPFLWRMRKFRVTLLQRMGIGIVFAILSMFTAGFVEGVRRTRATEMTQMSVFWLALPLILMGLCESFNFIGLIEFFNSQFPEHMRSIANSLFPLSFAAANYLSSLLVTTVHKVSGTKDHPDWLNKDLDRGKLDYFYYLIAVLGVVNLVYFWYCAHRYQYKAGSQIEDFNEEKSLLDIEPNQRHDQSPS</sequence>
<accession>Q9LFX9</accession>
<accession>A9QUN3</accession>
<comment type="function">
    <text evidence="3">Low-affinity proton-dependent nitrate transporter. Not involved in dipeptides transport. Involved in delivering nitrate for seed development.</text>
</comment>
<comment type="biophysicochemical properties">
    <kinetics>
        <KM evidence="3">6 mM for nitrate at -60 mV</KM>
    </kinetics>
</comment>
<comment type="subcellular location">
    <subcellularLocation>
        <location evidence="3">Cell membrane</location>
        <topology evidence="3">Multi-pass membrane protein</topology>
    </subcellularLocation>
</comment>
<comment type="tissue specificity">
    <text evidence="2 3">Expressed in flowers and siliques. Expressed in vascular bundle of the siliques and in funiculus.</text>
</comment>
<comment type="developmental stage">
    <text evidence="3">Expression increases after pollination.</text>
</comment>
<comment type="induction">
    <text evidence="3">Up-regulated by nitrogen starvation.</text>
</comment>
<comment type="disruption phenotype">
    <text evidence="3">Aberrant embryo development and increased seed abortion. Reduced seed nitrate content.</text>
</comment>
<comment type="similarity">
    <text evidence="4">Belongs to the major facilitator superfamily. Proton-dependent oligopeptide transporter (POT/PTR) (TC 2.A.17) family.</text>
</comment>
<comment type="sequence caution" evidence="4">
    <conflict type="erroneous gene model prediction">
        <sequence resource="EMBL-CDS" id="AAF79856"/>
    </conflict>
</comment>
<keyword id="KW-1003">Cell membrane</keyword>
<keyword id="KW-0472">Membrane</keyword>
<keyword id="KW-0534">Nitrate assimilation</keyword>
<keyword id="KW-1185">Reference proteome</keyword>
<keyword id="KW-0769">Symport</keyword>
<keyword id="KW-0812">Transmembrane</keyword>
<keyword id="KW-1133">Transmembrane helix</keyword>
<keyword id="KW-0813">Transport</keyword>
<protein>
    <recommendedName>
        <fullName>Protein NRT1/ PTR FAMILY 2.12</fullName>
        <shortName>AtNPF2.12</shortName>
    </recommendedName>
    <alternativeName>
        <fullName>Nitrate transporter 1.6</fullName>
    </alternativeName>
</protein>
<name>PTR13_ARATH</name>
<dbReference type="EMBL" id="EU266070">
    <property type="protein sequence ID" value="ABX61048.1"/>
    <property type="molecule type" value="mRNA"/>
</dbReference>
<dbReference type="EMBL" id="AC000348">
    <property type="protein sequence ID" value="AAF79856.1"/>
    <property type="status" value="ALT_SEQ"/>
    <property type="molecule type" value="Genomic_DNA"/>
</dbReference>
<dbReference type="EMBL" id="CP002684">
    <property type="protein sequence ID" value="AEE30777.1"/>
    <property type="molecule type" value="Genomic_DNA"/>
</dbReference>
<dbReference type="PIR" id="E86397">
    <property type="entry name" value="E86397"/>
</dbReference>
<dbReference type="SMR" id="Q9LFX9"/>
<dbReference type="FunCoup" id="Q9LFX9">
    <property type="interactions" value="1"/>
</dbReference>
<dbReference type="STRING" id="3702.Q9LFX9"/>
<dbReference type="TCDB" id="2.A.17.3.14">
    <property type="family name" value="the proton-dependent oligopeptide transporter (pot/ptr) family"/>
</dbReference>
<dbReference type="PaxDb" id="3702-AT1G27080.1"/>
<dbReference type="ProteomicsDB" id="226439"/>
<dbReference type="EnsemblPlants" id="AT1G27080.1">
    <property type="protein sequence ID" value="AT1G27080.1"/>
    <property type="gene ID" value="AT1G27080"/>
</dbReference>
<dbReference type="GeneID" id="839597"/>
<dbReference type="Gramene" id="AT1G27080.1">
    <property type="protein sequence ID" value="AT1G27080.1"/>
    <property type="gene ID" value="AT1G27080"/>
</dbReference>
<dbReference type="KEGG" id="ath:AT1G27080"/>
<dbReference type="Araport" id="AT1G27080"/>
<dbReference type="TAIR" id="AT1G27080">
    <property type="gene designation" value="NPF2.12"/>
</dbReference>
<dbReference type="eggNOG" id="KOG1237">
    <property type="taxonomic scope" value="Eukaryota"/>
</dbReference>
<dbReference type="HOGENOM" id="CLU_009313_4_2_1"/>
<dbReference type="InParanoid" id="Q9LFX9"/>
<dbReference type="OMA" id="WRAITFI"/>
<dbReference type="PhylomeDB" id="Q9LFX9"/>
<dbReference type="SABIO-RK" id="Q9LFX9"/>
<dbReference type="PRO" id="PR:Q9LFX9"/>
<dbReference type="Proteomes" id="UP000006548">
    <property type="component" value="Chromosome 1"/>
</dbReference>
<dbReference type="ExpressionAtlas" id="Q9LFX9">
    <property type="expression patterns" value="baseline and differential"/>
</dbReference>
<dbReference type="GO" id="GO:0005886">
    <property type="term" value="C:plasma membrane"/>
    <property type="evidence" value="ECO:0000314"/>
    <property type="project" value="TAIR"/>
</dbReference>
<dbReference type="GO" id="GO:0080054">
    <property type="term" value="F:low-affinity nitrate transmembrane transporter activity"/>
    <property type="evidence" value="ECO:0000314"/>
    <property type="project" value="TAIR"/>
</dbReference>
<dbReference type="GO" id="GO:0015293">
    <property type="term" value="F:symporter activity"/>
    <property type="evidence" value="ECO:0007669"/>
    <property type="project" value="UniProtKB-KW"/>
</dbReference>
<dbReference type="GO" id="GO:0043562">
    <property type="term" value="P:cellular response to nitrogen levels"/>
    <property type="evidence" value="ECO:0000270"/>
    <property type="project" value="TAIR"/>
</dbReference>
<dbReference type="GO" id="GO:0009793">
    <property type="term" value="P:embryo development ending in seed dormancy"/>
    <property type="evidence" value="ECO:0000315"/>
    <property type="project" value="TAIR"/>
</dbReference>
<dbReference type="GO" id="GO:0042128">
    <property type="term" value="P:nitrate assimilation"/>
    <property type="evidence" value="ECO:0007669"/>
    <property type="project" value="UniProtKB-KW"/>
</dbReference>
<dbReference type="GO" id="GO:0015706">
    <property type="term" value="P:nitrate transmembrane transport"/>
    <property type="evidence" value="ECO:0000314"/>
    <property type="project" value="TAIR"/>
</dbReference>
<dbReference type="GO" id="GO:0006857">
    <property type="term" value="P:oligopeptide transport"/>
    <property type="evidence" value="ECO:0007669"/>
    <property type="project" value="InterPro"/>
</dbReference>
<dbReference type="GO" id="GO:0048316">
    <property type="term" value="P:seed development"/>
    <property type="evidence" value="ECO:0000315"/>
    <property type="project" value="TAIR"/>
</dbReference>
<dbReference type="GO" id="GO:0010098">
    <property type="term" value="P:suspensor development"/>
    <property type="evidence" value="ECO:0000315"/>
    <property type="project" value="TAIR"/>
</dbReference>
<dbReference type="CDD" id="cd17416">
    <property type="entry name" value="MFS_NPF1_2"/>
    <property type="match status" value="1"/>
</dbReference>
<dbReference type="Gene3D" id="1.20.1250.20">
    <property type="entry name" value="MFS general substrate transporter like domains"/>
    <property type="match status" value="1"/>
</dbReference>
<dbReference type="InterPro" id="IPR036259">
    <property type="entry name" value="MFS_trans_sf"/>
</dbReference>
<dbReference type="InterPro" id="IPR000109">
    <property type="entry name" value="POT_fam"/>
</dbReference>
<dbReference type="InterPro" id="IPR018456">
    <property type="entry name" value="PTR2_symporter_CS"/>
</dbReference>
<dbReference type="PANTHER" id="PTHR11654">
    <property type="entry name" value="OLIGOPEPTIDE TRANSPORTER-RELATED"/>
    <property type="match status" value="1"/>
</dbReference>
<dbReference type="Pfam" id="PF00854">
    <property type="entry name" value="PTR2"/>
    <property type="match status" value="1"/>
</dbReference>
<dbReference type="SUPFAM" id="SSF103473">
    <property type="entry name" value="MFS general substrate transporter"/>
    <property type="match status" value="1"/>
</dbReference>
<dbReference type="PROSITE" id="PS01022">
    <property type="entry name" value="PTR2_1"/>
    <property type="match status" value="1"/>
</dbReference>
<reference key="1">
    <citation type="journal article" date="2008" name="Plant Cell">
        <title>Characterization of the Arabidopsis nitrate transporter NRT1.6 reveals a role of nitrate in early embryo development.</title>
        <authorList>
            <person name="Almagro A."/>
            <person name="Lin S.H."/>
            <person name="Tsay Y.F."/>
        </authorList>
    </citation>
    <scope>NUCLEOTIDE SEQUENCE [MRNA]</scope>
    <scope>FUNCTION</scope>
    <scope>BIOPHYSICOCHEMICAL PROPERTIES</scope>
    <scope>TISSUE SPECIFICITY</scope>
    <scope>DEVELOPMENTAL STAGE</scope>
    <scope>INDUCTION BY NITROGEN</scope>
    <scope>SUBCELLULAR LOCATION</scope>
    <scope>DISRUPTION PHENOTYPE</scope>
</reference>
<reference key="2">
    <citation type="journal article" date="2000" name="Nature">
        <title>Sequence and analysis of chromosome 1 of the plant Arabidopsis thaliana.</title>
        <authorList>
            <person name="Theologis A."/>
            <person name="Ecker J.R."/>
            <person name="Palm C.J."/>
            <person name="Federspiel N.A."/>
            <person name="Kaul S."/>
            <person name="White O."/>
            <person name="Alonso J."/>
            <person name="Altafi H."/>
            <person name="Araujo R."/>
            <person name="Bowman C.L."/>
            <person name="Brooks S.Y."/>
            <person name="Buehler E."/>
            <person name="Chan A."/>
            <person name="Chao Q."/>
            <person name="Chen H."/>
            <person name="Cheuk R.F."/>
            <person name="Chin C.W."/>
            <person name="Chung M.K."/>
            <person name="Conn L."/>
            <person name="Conway A.B."/>
            <person name="Conway A.R."/>
            <person name="Creasy T.H."/>
            <person name="Dewar K."/>
            <person name="Dunn P."/>
            <person name="Etgu P."/>
            <person name="Feldblyum T.V."/>
            <person name="Feng J.-D."/>
            <person name="Fong B."/>
            <person name="Fujii C.Y."/>
            <person name="Gill J.E."/>
            <person name="Goldsmith A.D."/>
            <person name="Haas B."/>
            <person name="Hansen N.F."/>
            <person name="Hughes B."/>
            <person name="Huizar L."/>
            <person name="Hunter J.L."/>
            <person name="Jenkins J."/>
            <person name="Johnson-Hopson C."/>
            <person name="Khan S."/>
            <person name="Khaykin E."/>
            <person name="Kim C.J."/>
            <person name="Koo H.L."/>
            <person name="Kremenetskaia I."/>
            <person name="Kurtz D.B."/>
            <person name="Kwan A."/>
            <person name="Lam B."/>
            <person name="Langin-Hooper S."/>
            <person name="Lee A."/>
            <person name="Lee J.M."/>
            <person name="Lenz C.A."/>
            <person name="Li J.H."/>
            <person name="Li Y.-P."/>
            <person name="Lin X."/>
            <person name="Liu S.X."/>
            <person name="Liu Z.A."/>
            <person name="Luros J.S."/>
            <person name="Maiti R."/>
            <person name="Marziali A."/>
            <person name="Militscher J."/>
            <person name="Miranda M."/>
            <person name="Nguyen M."/>
            <person name="Nierman W.C."/>
            <person name="Osborne B.I."/>
            <person name="Pai G."/>
            <person name="Peterson J."/>
            <person name="Pham P.K."/>
            <person name="Rizzo M."/>
            <person name="Rooney T."/>
            <person name="Rowley D."/>
            <person name="Sakano H."/>
            <person name="Salzberg S.L."/>
            <person name="Schwartz J.R."/>
            <person name="Shinn P."/>
            <person name="Southwick A.M."/>
            <person name="Sun H."/>
            <person name="Tallon L.J."/>
            <person name="Tambunga G."/>
            <person name="Toriumi M.J."/>
            <person name="Town C.D."/>
            <person name="Utterback T."/>
            <person name="Van Aken S."/>
            <person name="Vaysberg M."/>
            <person name="Vysotskaia V.S."/>
            <person name="Walker M."/>
            <person name="Wu D."/>
            <person name="Yu G."/>
            <person name="Fraser C.M."/>
            <person name="Venter J.C."/>
            <person name="Davis R.W."/>
        </authorList>
    </citation>
    <scope>NUCLEOTIDE SEQUENCE [LARGE SCALE GENOMIC DNA]</scope>
    <source>
        <strain>cv. Columbia</strain>
    </source>
</reference>
<reference key="3">
    <citation type="journal article" date="2017" name="Plant J.">
        <title>Araport11: a complete reannotation of the Arabidopsis thaliana reference genome.</title>
        <authorList>
            <person name="Cheng C.Y."/>
            <person name="Krishnakumar V."/>
            <person name="Chan A.P."/>
            <person name="Thibaud-Nissen F."/>
            <person name="Schobel S."/>
            <person name="Town C.D."/>
        </authorList>
    </citation>
    <scope>GENOME REANNOTATION</scope>
    <source>
        <strain>cv. Columbia</strain>
    </source>
</reference>
<reference key="4">
    <citation type="journal article" date="2007" name="FEBS Lett.">
        <title>Nitrate transporters and peptide transporters.</title>
        <authorList>
            <person name="Tsay Y.F."/>
            <person name="Chiu C.C."/>
            <person name="Tsai C.B."/>
            <person name="Ho C.H."/>
            <person name="Hsu P.K."/>
        </authorList>
    </citation>
    <scope>TISSUE SPECIFICITY</scope>
    <scope>GENE FAMILY</scope>
</reference>
<reference key="5">
    <citation type="journal article" date="2010" name="Plant Cell">
        <title>The Arabidopsis nitrate transporter NRT1.8 functions in nitrate removal from the xylem sap and mediates cadmium tolerance.</title>
        <authorList>
            <person name="Li J.Y."/>
            <person name="Fu Y.L."/>
            <person name="Pike S.M."/>
            <person name="Bao J."/>
            <person name="Tian W."/>
            <person name="Zhang Y."/>
            <person name="Chen C.Z."/>
            <person name="Zhang Y."/>
            <person name="Li H.M."/>
            <person name="Huang J."/>
            <person name="Li L.G."/>
            <person name="Schroeder J.I."/>
            <person name="Gassmann W."/>
            <person name="Gong J.M."/>
        </authorList>
    </citation>
    <scope>GENE FAMILY</scope>
</reference>
<reference key="6">
    <citation type="journal article" date="2014" name="Trends Plant Sci.">
        <title>A unified nomenclature of NITRATE TRANSPORTER 1/PEPTIDE TRANSPORTER family members in plants.</title>
        <authorList>
            <person name="Leran S."/>
            <person name="Varala K."/>
            <person name="Boyer J.C."/>
            <person name="Chiurazzi M."/>
            <person name="Crawford N."/>
            <person name="Daniel-Vedele F."/>
            <person name="David L."/>
            <person name="Dickstein R."/>
            <person name="Fernandez E."/>
            <person name="Forde B."/>
            <person name="Gassmann W."/>
            <person name="Geiger D."/>
            <person name="Gojon A."/>
            <person name="Gong J.M."/>
            <person name="Halkier B.A."/>
            <person name="Harris J.M."/>
            <person name="Hedrich R."/>
            <person name="Limami A.M."/>
            <person name="Rentsch D."/>
            <person name="Seo M."/>
            <person name="Tsay Y.F."/>
            <person name="Zhang M."/>
            <person name="Coruzzi G."/>
            <person name="Lacombe B."/>
        </authorList>
    </citation>
    <scope>GENE FAMILY</scope>
    <scope>NOMENCLATURE</scope>
</reference>
<evidence type="ECO:0000255" key="1"/>
<evidence type="ECO:0000269" key="2">
    <source>
    </source>
</evidence>
<evidence type="ECO:0000269" key="3">
    <source>
    </source>
</evidence>
<evidence type="ECO:0000305" key="4"/>